<keyword id="KW-0067">ATP-binding</keyword>
<keyword id="KW-0143">Chaperone</keyword>
<keyword id="KW-0963">Cytoplasm</keyword>
<keyword id="KW-0547">Nucleotide-binding</keyword>
<keyword id="KW-1185">Reference proteome</keyword>
<gene>
    <name evidence="1" type="primary">hslU</name>
    <name type="ordered locus">NGR_c34070</name>
</gene>
<reference key="1">
    <citation type="journal article" date="2009" name="Appl. Environ. Microbiol.">
        <title>Rhizobium sp. strain NGR234 possesses a remarkable number of secretion systems.</title>
        <authorList>
            <person name="Schmeisser C."/>
            <person name="Liesegang H."/>
            <person name="Krysciak D."/>
            <person name="Bakkou N."/>
            <person name="Le Quere A."/>
            <person name="Wollherr A."/>
            <person name="Heinemeyer I."/>
            <person name="Morgenstern B."/>
            <person name="Pommerening-Roeser A."/>
            <person name="Flores M."/>
            <person name="Palacios R."/>
            <person name="Brenner S."/>
            <person name="Gottschalk G."/>
            <person name="Schmitz R.A."/>
            <person name="Broughton W.J."/>
            <person name="Perret X."/>
            <person name="Strittmatter A.W."/>
            <person name="Streit W.R."/>
        </authorList>
    </citation>
    <scope>NUCLEOTIDE SEQUENCE [LARGE SCALE GENOMIC DNA]</scope>
    <source>
        <strain>NBRC 101917 / NGR234</strain>
    </source>
</reference>
<proteinExistence type="inferred from homology"/>
<organism>
    <name type="scientific">Sinorhizobium fredii (strain NBRC 101917 / NGR234)</name>
    <dbReference type="NCBI Taxonomy" id="394"/>
    <lineage>
        <taxon>Bacteria</taxon>
        <taxon>Pseudomonadati</taxon>
        <taxon>Pseudomonadota</taxon>
        <taxon>Alphaproteobacteria</taxon>
        <taxon>Hyphomicrobiales</taxon>
        <taxon>Rhizobiaceae</taxon>
        <taxon>Sinorhizobium/Ensifer group</taxon>
        <taxon>Sinorhizobium</taxon>
    </lineage>
</organism>
<name>HSLU_SINFN</name>
<evidence type="ECO:0000255" key="1">
    <source>
        <dbReference type="HAMAP-Rule" id="MF_00249"/>
    </source>
</evidence>
<sequence length="434" mass="47901">MTNFSPREIVSELDRYIIGQKDAKRAVAIALRNRWRRQQLSDELRDEVMPKNILMIGPTGVGKTEISRRLAKLAGAPFVKVEATKFTEVGYVGRDVEQIVRDLVEVGITLVREKKRAEVKAKAHQNAEERVLDALVGTTASPATRDSFRKKLRANELDEKEIEIDIAETGAPGGFEIPGMPGANIGVLNLSEMFGKALGGRTRKVKTTVKDSYELLVNDESDKLLDNEQIQREAMAAAENDGIVFLDEIDKIAARDGGIGAGVSREGVQRDLLPLVEGTTVATKYGPMKTDHILFIASGAFHVSKPSDLLPELQGRLPIRVELRALTKEDFRRILTETEASLIRQYKALLETEGVALDFTEDAIDALAEVAVQLNANVENIGARRLQTVMERVLDDISFNAPDRGGDTLMIDADYVRKHVGDLAANTDLSRYIL</sequence>
<comment type="function">
    <text evidence="1">ATPase subunit of a proteasome-like degradation complex; this subunit has chaperone activity. The binding of ATP and its subsequent hydrolysis by HslU are essential for unfolding of protein substrates subsequently hydrolyzed by HslV. HslU recognizes the N-terminal part of its protein substrates and unfolds these before they are guided to HslV for hydrolysis.</text>
</comment>
<comment type="subunit">
    <text evidence="1">A double ring-shaped homohexamer of HslV is capped on each side by a ring-shaped HslU homohexamer. The assembly of the HslU/HslV complex is dependent on binding of ATP.</text>
</comment>
<comment type="subcellular location">
    <subcellularLocation>
        <location evidence="1">Cytoplasm</location>
    </subcellularLocation>
</comment>
<comment type="similarity">
    <text evidence="1">Belongs to the ClpX chaperone family. HslU subfamily.</text>
</comment>
<feature type="chain" id="PRO_1000125447" description="ATP-dependent protease ATPase subunit HslU">
    <location>
        <begin position="1"/>
        <end position="434"/>
    </location>
</feature>
<feature type="binding site" evidence="1">
    <location>
        <position position="18"/>
    </location>
    <ligand>
        <name>ATP</name>
        <dbReference type="ChEBI" id="CHEBI:30616"/>
    </ligand>
</feature>
<feature type="binding site" evidence="1">
    <location>
        <begin position="60"/>
        <end position="65"/>
    </location>
    <ligand>
        <name>ATP</name>
        <dbReference type="ChEBI" id="CHEBI:30616"/>
    </ligand>
</feature>
<feature type="binding site" evidence="1">
    <location>
        <position position="247"/>
    </location>
    <ligand>
        <name>ATP</name>
        <dbReference type="ChEBI" id="CHEBI:30616"/>
    </ligand>
</feature>
<feature type="binding site" evidence="1">
    <location>
        <position position="312"/>
    </location>
    <ligand>
        <name>ATP</name>
        <dbReference type="ChEBI" id="CHEBI:30616"/>
    </ligand>
</feature>
<feature type="binding site" evidence="1">
    <location>
        <position position="384"/>
    </location>
    <ligand>
        <name>ATP</name>
        <dbReference type="ChEBI" id="CHEBI:30616"/>
    </ligand>
</feature>
<dbReference type="EMBL" id="CP001389">
    <property type="protein sequence ID" value="ACP27137.1"/>
    <property type="molecule type" value="Genomic_DNA"/>
</dbReference>
<dbReference type="RefSeq" id="WP_012709884.1">
    <property type="nucleotide sequence ID" value="NC_012587.1"/>
</dbReference>
<dbReference type="RefSeq" id="YP_002827890.1">
    <property type="nucleotide sequence ID" value="NC_012587.1"/>
</dbReference>
<dbReference type="SMR" id="C3MBC8"/>
<dbReference type="STRING" id="394.NGR_c34070"/>
<dbReference type="KEGG" id="rhi:NGR_c34070"/>
<dbReference type="PATRIC" id="fig|394.7.peg.6257"/>
<dbReference type="eggNOG" id="COG1220">
    <property type="taxonomic scope" value="Bacteria"/>
</dbReference>
<dbReference type="HOGENOM" id="CLU_033123_0_0_5"/>
<dbReference type="OrthoDB" id="9804062at2"/>
<dbReference type="Proteomes" id="UP000001054">
    <property type="component" value="Chromosome"/>
</dbReference>
<dbReference type="GO" id="GO:0009376">
    <property type="term" value="C:HslUV protease complex"/>
    <property type="evidence" value="ECO:0007669"/>
    <property type="project" value="UniProtKB-UniRule"/>
</dbReference>
<dbReference type="GO" id="GO:0005524">
    <property type="term" value="F:ATP binding"/>
    <property type="evidence" value="ECO:0007669"/>
    <property type="project" value="UniProtKB-UniRule"/>
</dbReference>
<dbReference type="GO" id="GO:0016887">
    <property type="term" value="F:ATP hydrolysis activity"/>
    <property type="evidence" value="ECO:0007669"/>
    <property type="project" value="InterPro"/>
</dbReference>
<dbReference type="GO" id="GO:0008233">
    <property type="term" value="F:peptidase activity"/>
    <property type="evidence" value="ECO:0007669"/>
    <property type="project" value="InterPro"/>
</dbReference>
<dbReference type="GO" id="GO:0036402">
    <property type="term" value="F:proteasome-activating activity"/>
    <property type="evidence" value="ECO:0007669"/>
    <property type="project" value="UniProtKB-UniRule"/>
</dbReference>
<dbReference type="GO" id="GO:0043335">
    <property type="term" value="P:protein unfolding"/>
    <property type="evidence" value="ECO:0007669"/>
    <property type="project" value="UniProtKB-UniRule"/>
</dbReference>
<dbReference type="GO" id="GO:0051603">
    <property type="term" value="P:proteolysis involved in protein catabolic process"/>
    <property type="evidence" value="ECO:0007669"/>
    <property type="project" value="TreeGrafter"/>
</dbReference>
<dbReference type="CDD" id="cd19498">
    <property type="entry name" value="RecA-like_HslU"/>
    <property type="match status" value="1"/>
</dbReference>
<dbReference type="FunFam" id="3.40.50.300:FF:000213">
    <property type="entry name" value="ATP-dependent protease ATPase subunit HslU"/>
    <property type="match status" value="1"/>
</dbReference>
<dbReference type="FunFam" id="3.40.50.300:FF:000220">
    <property type="entry name" value="ATP-dependent protease ATPase subunit HslU"/>
    <property type="match status" value="1"/>
</dbReference>
<dbReference type="Gene3D" id="1.10.8.60">
    <property type="match status" value="1"/>
</dbReference>
<dbReference type="Gene3D" id="3.40.50.300">
    <property type="entry name" value="P-loop containing nucleotide triphosphate hydrolases"/>
    <property type="match status" value="2"/>
</dbReference>
<dbReference type="HAMAP" id="MF_00249">
    <property type="entry name" value="HslU"/>
    <property type="match status" value="1"/>
</dbReference>
<dbReference type="InterPro" id="IPR003593">
    <property type="entry name" value="AAA+_ATPase"/>
</dbReference>
<dbReference type="InterPro" id="IPR050052">
    <property type="entry name" value="ATP-dep_Clp_protease_ClpX"/>
</dbReference>
<dbReference type="InterPro" id="IPR003959">
    <property type="entry name" value="ATPase_AAA_core"/>
</dbReference>
<dbReference type="InterPro" id="IPR019489">
    <property type="entry name" value="Clp_ATPase_C"/>
</dbReference>
<dbReference type="InterPro" id="IPR004491">
    <property type="entry name" value="HslU"/>
</dbReference>
<dbReference type="InterPro" id="IPR027417">
    <property type="entry name" value="P-loop_NTPase"/>
</dbReference>
<dbReference type="NCBIfam" id="TIGR00390">
    <property type="entry name" value="hslU"/>
    <property type="match status" value="1"/>
</dbReference>
<dbReference type="NCBIfam" id="NF003544">
    <property type="entry name" value="PRK05201.1"/>
    <property type="match status" value="1"/>
</dbReference>
<dbReference type="PANTHER" id="PTHR48102">
    <property type="entry name" value="ATP-DEPENDENT CLP PROTEASE ATP-BINDING SUBUNIT CLPX-LIKE, MITOCHONDRIAL-RELATED"/>
    <property type="match status" value="1"/>
</dbReference>
<dbReference type="PANTHER" id="PTHR48102:SF3">
    <property type="entry name" value="ATP-DEPENDENT PROTEASE ATPASE SUBUNIT HSLU"/>
    <property type="match status" value="1"/>
</dbReference>
<dbReference type="Pfam" id="PF00004">
    <property type="entry name" value="AAA"/>
    <property type="match status" value="1"/>
</dbReference>
<dbReference type="Pfam" id="PF07724">
    <property type="entry name" value="AAA_2"/>
    <property type="match status" value="1"/>
</dbReference>
<dbReference type="Pfam" id="PF10431">
    <property type="entry name" value="ClpB_D2-small"/>
    <property type="match status" value="1"/>
</dbReference>
<dbReference type="SMART" id="SM00382">
    <property type="entry name" value="AAA"/>
    <property type="match status" value="1"/>
</dbReference>
<dbReference type="SMART" id="SM01086">
    <property type="entry name" value="ClpB_D2-small"/>
    <property type="match status" value="1"/>
</dbReference>
<dbReference type="SUPFAM" id="SSF52540">
    <property type="entry name" value="P-loop containing nucleoside triphosphate hydrolases"/>
    <property type="match status" value="1"/>
</dbReference>
<accession>C3MBC8</accession>
<protein>
    <recommendedName>
        <fullName evidence="1">ATP-dependent protease ATPase subunit HslU</fullName>
    </recommendedName>
    <alternativeName>
        <fullName evidence="1">Unfoldase HslU</fullName>
    </alternativeName>
</protein>